<gene>
    <name evidence="1" type="primary">cysS</name>
    <name type="ordered locus">TGAM_1549</name>
</gene>
<accession>C5A739</accession>
<proteinExistence type="inferred from homology"/>
<sequence>MAIRIYNTLTRQKEEFKPLHEGEVRMYVCGPTVYDYPHLGHARTYIAFDVIRRYLEHKGYTVLMVMNFTDIDDKIIKRANETGEDPKELAEKFLRIFLEDMKALKVKPADIYPRVTEHMQDIISFIKKLQEKGYAYEGSDGVYFEVRKFKDYGKLSKIKLEDLVKGARVEPGEGKRNPEDFALWKKAKPGEPKWESPWGEGRPGWHIECSTMSSKYLGESFDIHGGGNDLIFPHHENEIAQSEACFGHEWVHYWMHTGFLMVNGEKMSKSLGNFVTVRELLKRYNPEVIRLFVLQRHYRSPLDYSEEGIEHAKNNLERLYNTLENIRVAMSKAEISFRWDEPEFRAYEAIRDARKKFYEAMDDDFNTAEALKAVFEVSNAINRYLTEVEKPKESILRKAWEFFKDVGEVFGLFEDYFKEQKAENDEELINLLVEVRAQLRKEKKFDLADKIREELRKLGIQLEDTPQGTVWKRIKV</sequence>
<organism>
    <name type="scientific">Thermococcus gammatolerans (strain DSM 15229 / JCM 11827 / EJ3)</name>
    <dbReference type="NCBI Taxonomy" id="593117"/>
    <lineage>
        <taxon>Archaea</taxon>
        <taxon>Methanobacteriati</taxon>
        <taxon>Methanobacteriota</taxon>
        <taxon>Thermococci</taxon>
        <taxon>Thermococcales</taxon>
        <taxon>Thermococcaceae</taxon>
        <taxon>Thermococcus</taxon>
    </lineage>
</organism>
<reference key="1">
    <citation type="journal article" date="2007" name="Genome Biol.">
        <title>Genome analysis and genome-wide proteomics of Thermococcus gammatolerans, the most radioresistant organism known amongst the Archaea.</title>
        <authorList>
            <person name="Zivanovic Y."/>
            <person name="Armengaud J."/>
            <person name="Lagorce A."/>
            <person name="Leplat C."/>
            <person name="Guerin P."/>
            <person name="Dutertre M."/>
            <person name="Anthouard V."/>
            <person name="Forterre P."/>
            <person name="Wincker P."/>
            <person name="Confalonieri F."/>
        </authorList>
    </citation>
    <scope>NUCLEOTIDE SEQUENCE [LARGE SCALE GENOMIC DNA]</scope>
    <source>
        <strain>DSM 15229 / JCM 11827 / EJ3</strain>
    </source>
</reference>
<keyword id="KW-0030">Aminoacyl-tRNA synthetase</keyword>
<keyword id="KW-0067">ATP-binding</keyword>
<keyword id="KW-0963">Cytoplasm</keyword>
<keyword id="KW-0436">Ligase</keyword>
<keyword id="KW-0479">Metal-binding</keyword>
<keyword id="KW-0547">Nucleotide-binding</keyword>
<keyword id="KW-0648">Protein biosynthesis</keyword>
<keyword id="KW-1185">Reference proteome</keyword>
<keyword id="KW-0862">Zinc</keyword>
<name>SYC_THEGJ</name>
<protein>
    <recommendedName>
        <fullName evidence="1">Cysteine--tRNA ligase</fullName>
        <ecNumber evidence="1">6.1.1.16</ecNumber>
    </recommendedName>
    <alternativeName>
        <fullName evidence="1">Cysteinyl-tRNA synthetase</fullName>
        <shortName evidence="1">CysRS</shortName>
    </alternativeName>
</protein>
<dbReference type="EC" id="6.1.1.16" evidence="1"/>
<dbReference type="EMBL" id="CP001398">
    <property type="protein sequence ID" value="ACS34051.1"/>
    <property type="molecule type" value="Genomic_DNA"/>
</dbReference>
<dbReference type="RefSeq" id="WP_015859162.1">
    <property type="nucleotide sequence ID" value="NC_012804.1"/>
</dbReference>
<dbReference type="SMR" id="C5A739"/>
<dbReference type="STRING" id="593117.TGAM_1549"/>
<dbReference type="PaxDb" id="593117-TGAM_1549"/>
<dbReference type="GeneID" id="7988443"/>
<dbReference type="KEGG" id="tga:TGAM_1549"/>
<dbReference type="PATRIC" id="fig|593117.10.peg.1552"/>
<dbReference type="eggNOG" id="arCOG00486">
    <property type="taxonomic scope" value="Archaea"/>
</dbReference>
<dbReference type="HOGENOM" id="CLU_013528_0_1_2"/>
<dbReference type="OrthoDB" id="9445at2157"/>
<dbReference type="Proteomes" id="UP000001488">
    <property type="component" value="Chromosome"/>
</dbReference>
<dbReference type="GO" id="GO:0005737">
    <property type="term" value="C:cytoplasm"/>
    <property type="evidence" value="ECO:0007669"/>
    <property type="project" value="UniProtKB-SubCell"/>
</dbReference>
<dbReference type="GO" id="GO:0005524">
    <property type="term" value="F:ATP binding"/>
    <property type="evidence" value="ECO:0007669"/>
    <property type="project" value="UniProtKB-UniRule"/>
</dbReference>
<dbReference type="GO" id="GO:0004817">
    <property type="term" value="F:cysteine-tRNA ligase activity"/>
    <property type="evidence" value="ECO:0007669"/>
    <property type="project" value="UniProtKB-UniRule"/>
</dbReference>
<dbReference type="GO" id="GO:0008270">
    <property type="term" value="F:zinc ion binding"/>
    <property type="evidence" value="ECO:0007669"/>
    <property type="project" value="UniProtKB-UniRule"/>
</dbReference>
<dbReference type="GO" id="GO:0006423">
    <property type="term" value="P:cysteinyl-tRNA aminoacylation"/>
    <property type="evidence" value="ECO:0007669"/>
    <property type="project" value="UniProtKB-UniRule"/>
</dbReference>
<dbReference type="CDD" id="cd00672">
    <property type="entry name" value="CysRS_core"/>
    <property type="match status" value="1"/>
</dbReference>
<dbReference type="FunFam" id="3.40.50.620:FF:000009">
    <property type="entry name" value="Cysteine--tRNA ligase"/>
    <property type="match status" value="1"/>
</dbReference>
<dbReference type="Gene3D" id="1.20.120.1910">
    <property type="entry name" value="Cysteine-tRNA ligase, C-terminal anti-codon recognition domain"/>
    <property type="match status" value="1"/>
</dbReference>
<dbReference type="Gene3D" id="3.40.50.620">
    <property type="entry name" value="HUPs"/>
    <property type="match status" value="1"/>
</dbReference>
<dbReference type="HAMAP" id="MF_00041">
    <property type="entry name" value="Cys_tRNA_synth"/>
    <property type="match status" value="1"/>
</dbReference>
<dbReference type="InterPro" id="IPR015803">
    <property type="entry name" value="Cys-tRNA-ligase"/>
</dbReference>
<dbReference type="InterPro" id="IPR015273">
    <property type="entry name" value="Cys-tRNA-synt_Ia_DALR"/>
</dbReference>
<dbReference type="InterPro" id="IPR024909">
    <property type="entry name" value="Cys-tRNA/MSH_ligase"/>
</dbReference>
<dbReference type="InterPro" id="IPR014729">
    <property type="entry name" value="Rossmann-like_a/b/a_fold"/>
</dbReference>
<dbReference type="InterPro" id="IPR032678">
    <property type="entry name" value="tRNA-synt_1_cat_dom"/>
</dbReference>
<dbReference type="InterPro" id="IPR009080">
    <property type="entry name" value="tRNAsynth_Ia_anticodon-bd"/>
</dbReference>
<dbReference type="NCBIfam" id="TIGR00435">
    <property type="entry name" value="cysS"/>
    <property type="match status" value="1"/>
</dbReference>
<dbReference type="PANTHER" id="PTHR10890:SF3">
    <property type="entry name" value="CYSTEINE--TRNA LIGASE, CYTOPLASMIC"/>
    <property type="match status" value="1"/>
</dbReference>
<dbReference type="PANTHER" id="PTHR10890">
    <property type="entry name" value="CYSTEINYL-TRNA SYNTHETASE"/>
    <property type="match status" value="1"/>
</dbReference>
<dbReference type="Pfam" id="PF09190">
    <property type="entry name" value="DALR_2"/>
    <property type="match status" value="1"/>
</dbReference>
<dbReference type="Pfam" id="PF01406">
    <property type="entry name" value="tRNA-synt_1e"/>
    <property type="match status" value="1"/>
</dbReference>
<dbReference type="PRINTS" id="PR00983">
    <property type="entry name" value="TRNASYNTHCYS"/>
</dbReference>
<dbReference type="SMART" id="SM00840">
    <property type="entry name" value="DALR_2"/>
    <property type="match status" value="1"/>
</dbReference>
<dbReference type="SUPFAM" id="SSF47323">
    <property type="entry name" value="Anticodon-binding domain of a subclass of class I aminoacyl-tRNA synthetases"/>
    <property type="match status" value="1"/>
</dbReference>
<dbReference type="SUPFAM" id="SSF52374">
    <property type="entry name" value="Nucleotidylyl transferase"/>
    <property type="match status" value="1"/>
</dbReference>
<evidence type="ECO:0000255" key="1">
    <source>
        <dbReference type="HAMAP-Rule" id="MF_00041"/>
    </source>
</evidence>
<feature type="chain" id="PRO_1000202134" description="Cysteine--tRNA ligase">
    <location>
        <begin position="1"/>
        <end position="476"/>
    </location>
</feature>
<feature type="short sequence motif" description="'HIGH' region">
    <location>
        <begin position="31"/>
        <end position="41"/>
    </location>
</feature>
<feature type="short sequence motif" description="'KMSKS' region">
    <location>
        <begin position="266"/>
        <end position="270"/>
    </location>
</feature>
<feature type="binding site" evidence="1">
    <location>
        <position position="29"/>
    </location>
    <ligand>
        <name>Zn(2+)</name>
        <dbReference type="ChEBI" id="CHEBI:29105"/>
    </ligand>
</feature>
<feature type="binding site" evidence="1">
    <location>
        <position position="209"/>
    </location>
    <ligand>
        <name>Zn(2+)</name>
        <dbReference type="ChEBI" id="CHEBI:29105"/>
    </ligand>
</feature>
<feature type="binding site" evidence="1">
    <location>
        <position position="234"/>
    </location>
    <ligand>
        <name>Zn(2+)</name>
        <dbReference type="ChEBI" id="CHEBI:29105"/>
    </ligand>
</feature>
<feature type="binding site" evidence="1">
    <location>
        <position position="238"/>
    </location>
    <ligand>
        <name>Zn(2+)</name>
        <dbReference type="ChEBI" id="CHEBI:29105"/>
    </ligand>
</feature>
<feature type="binding site" evidence="1">
    <location>
        <position position="269"/>
    </location>
    <ligand>
        <name>ATP</name>
        <dbReference type="ChEBI" id="CHEBI:30616"/>
    </ligand>
</feature>
<comment type="catalytic activity">
    <reaction evidence="1">
        <text>tRNA(Cys) + L-cysteine + ATP = L-cysteinyl-tRNA(Cys) + AMP + diphosphate</text>
        <dbReference type="Rhea" id="RHEA:17773"/>
        <dbReference type="Rhea" id="RHEA-COMP:9661"/>
        <dbReference type="Rhea" id="RHEA-COMP:9679"/>
        <dbReference type="ChEBI" id="CHEBI:30616"/>
        <dbReference type="ChEBI" id="CHEBI:33019"/>
        <dbReference type="ChEBI" id="CHEBI:35235"/>
        <dbReference type="ChEBI" id="CHEBI:78442"/>
        <dbReference type="ChEBI" id="CHEBI:78517"/>
        <dbReference type="ChEBI" id="CHEBI:456215"/>
        <dbReference type="EC" id="6.1.1.16"/>
    </reaction>
</comment>
<comment type="cofactor">
    <cofactor evidence="1">
        <name>Zn(2+)</name>
        <dbReference type="ChEBI" id="CHEBI:29105"/>
    </cofactor>
    <text evidence="1">Binds 1 zinc ion per subunit.</text>
</comment>
<comment type="subcellular location">
    <subcellularLocation>
        <location evidence="1">Cytoplasm</location>
    </subcellularLocation>
</comment>
<comment type="similarity">
    <text evidence="1">Belongs to the class-I aminoacyl-tRNA synthetase family.</text>
</comment>